<evidence type="ECO:0000255" key="1">
    <source>
        <dbReference type="HAMAP-Rule" id="MF_00040"/>
    </source>
</evidence>
<comment type="function">
    <text evidence="1">Responsible for the release of ribosomes from messenger RNA at the termination of protein biosynthesis. May increase the efficiency of translation by recycling ribosomes from one round of translation to another.</text>
</comment>
<comment type="subcellular location">
    <subcellularLocation>
        <location evidence="1">Cytoplasm</location>
    </subcellularLocation>
</comment>
<comment type="similarity">
    <text evidence="1">Belongs to the RRF family.</text>
</comment>
<proteinExistence type="inferred from homology"/>
<protein>
    <recommendedName>
        <fullName evidence="1">Ribosome-recycling factor</fullName>
        <shortName evidence="1">RRF</shortName>
    </recommendedName>
    <alternativeName>
        <fullName evidence="1">Ribosome-releasing factor</fullName>
    </alternativeName>
</protein>
<name>RRF_PARP8</name>
<keyword id="KW-0963">Cytoplasm</keyword>
<keyword id="KW-0648">Protein biosynthesis</keyword>
<keyword id="KW-1185">Reference proteome</keyword>
<feature type="chain" id="PRO_1000090719" description="Ribosome-recycling factor">
    <location>
        <begin position="1"/>
        <end position="186"/>
    </location>
</feature>
<accession>B2JIC3</accession>
<sequence length="186" mass="20841">MSVADIKKGAEQKMQRSLDAFKNDLSKIRTGRAHTGLLDHIQVDYYGSPVPISQVANLTLVDARTIGVQPWEKKMVAVVEKAIRESDLGLNPASHGDVIRVPMPPLTEERRKELTKVVKSEGETAKVAVRNLRRDANEQLKKLVKDKEISEDDERRAGDDVQKLTDKFVAEIDKLVQTKEGEIMTV</sequence>
<reference key="1">
    <citation type="journal article" date="2014" name="Stand. Genomic Sci.">
        <title>Complete genome sequence of Burkholderia phymatum STM815(T), a broad host range and efficient nitrogen-fixing symbiont of Mimosa species.</title>
        <authorList>
            <person name="Moulin L."/>
            <person name="Klonowska A."/>
            <person name="Caroline B."/>
            <person name="Booth K."/>
            <person name="Vriezen J.A."/>
            <person name="Melkonian R."/>
            <person name="James E.K."/>
            <person name="Young J.P."/>
            <person name="Bena G."/>
            <person name="Hauser L."/>
            <person name="Land M."/>
            <person name="Kyrpides N."/>
            <person name="Bruce D."/>
            <person name="Chain P."/>
            <person name="Copeland A."/>
            <person name="Pitluck S."/>
            <person name="Woyke T."/>
            <person name="Lizotte-Waniewski M."/>
            <person name="Bristow J."/>
            <person name="Riley M."/>
        </authorList>
    </citation>
    <scope>NUCLEOTIDE SEQUENCE [LARGE SCALE GENOMIC DNA]</scope>
    <source>
        <strain>DSM 17167 / CIP 108236 / LMG 21445 / STM815</strain>
    </source>
</reference>
<dbReference type="EMBL" id="CP001043">
    <property type="protein sequence ID" value="ACC70517.1"/>
    <property type="molecule type" value="Genomic_DNA"/>
</dbReference>
<dbReference type="RefSeq" id="WP_012400731.1">
    <property type="nucleotide sequence ID" value="NC_010622.1"/>
</dbReference>
<dbReference type="SMR" id="B2JIC3"/>
<dbReference type="STRING" id="391038.Bphy_1335"/>
<dbReference type="KEGG" id="bph:Bphy_1335"/>
<dbReference type="eggNOG" id="COG0233">
    <property type="taxonomic scope" value="Bacteria"/>
</dbReference>
<dbReference type="HOGENOM" id="CLU_073981_2_1_4"/>
<dbReference type="OrthoDB" id="9804006at2"/>
<dbReference type="Proteomes" id="UP000001192">
    <property type="component" value="Chromosome 1"/>
</dbReference>
<dbReference type="GO" id="GO:0005829">
    <property type="term" value="C:cytosol"/>
    <property type="evidence" value="ECO:0007669"/>
    <property type="project" value="GOC"/>
</dbReference>
<dbReference type="GO" id="GO:0043023">
    <property type="term" value="F:ribosomal large subunit binding"/>
    <property type="evidence" value="ECO:0007669"/>
    <property type="project" value="TreeGrafter"/>
</dbReference>
<dbReference type="GO" id="GO:0002184">
    <property type="term" value="P:cytoplasmic translational termination"/>
    <property type="evidence" value="ECO:0007669"/>
    <property type="project" value="TreeGrafter"/>
</dbReference>
<dbReference type="CDD" id="cd00520">
    <property type="entry name" value="RRF"/>
    <property type="match status" value="1"/>
</dbReference>
<dbReference type="FunFam" id="1.10.132.20:FF:000001">
    <property type="entry name" value="Ribosome-recycling factor"/>
    <property type="match status" value="1"/>
</dbReference>
<dbReference type="FunFam" id="3.30.1360.40:FF:000001">
    <property type="entry name" value="Ribosome-recycling factor"/>
    <property type="match status" value="1"/>
</dbReference>
<dbReference type="Gene3D" id="3.30.1360.40">
    <property type="match status" value="1"/>
</dbReference>
<dbReference type="Gene3D" id="1.10.132.20">
    <property type="entry name" value="Ribosome-recycling factor"/>
    <property type="match status" value="1"/>
</dbReference>
<dbReference type="HAMAP" id="MF_00040">
    <property type="entry name" value="RRF"/>
    <property type="match status" value="1"/>
</dbReference>
<dbReference type="InterPro" id="IPR002661">
    <property type="entry name" value="Ribosome_recyc_fac"/>
</dbReference>
<dbReference type="InterPro" id="IPR023584">
    <property type="entry name" value="Ribosome_recyc_fac_dom"/>
</dbReference>
<dbReference type="InterPro" id="IPR036191">
    <property type="entry name" value="RRF_sf"/>
</dbReference>
<dbReference type="NCBIfam" id="TIGR00496">
    <property type="entry name" value="frr"/>
    <property type="match status" value="1"/>
</dbReference>
<dbReference type="PANTHER" id="PTHR20982:SF3">
    <property type="entry name" value="MITOCHONDRIAL RIBOSOME RECYCLING FACTOR PSEUDO 1"/>
    <property type="match status" value="1"/>
</dbReference>
<dbReference type="PANTHER" id="PTHR20982">
    <property type="entry name" value="RIBOSOME RECYCLING FACTOR"/>
    <property type="match status" value="1"/>
</dbReference>
<dbReference type="Pfam" id="PF01765">
    <property type="entry name" value="RRF"/>
    <property type="match status" value="1"/>
</dbReference>
<dbReference type="SUPFAM" id="SSF55194">
    <property type="entry name" value="Ribosome recycling factor, RRF"/>
    <property type="match status" value="1"/>
</dbReference>
<organism>
    <name type="scientific">Paraburkholderia phymatum (strain DSM 17167 / CIP 108236 / LMG 21445 / STM815)</name>
    <name type="common">Burkholderia phymatum</name>
    <dbReference type="NCBI Taxonomy" id="391038"/>
    <lineage>
        <taxon>Bacteria</taxon>
        <taxon>Pseudomonadati</taxon>
        <taxon>Pseudomonadota</taxon>
        <taxon>Betaproteobacteria</taxon>
        <taxon>Burkholderiales</taxon>
        <taxon>Burkholderiaceae</taxon>
        <taxon>Paraburkholderia</taxon>
    </lineage>
</organism>
<gene>
    <name evidence="1" type="primary">frr</name>
    <name type="ordered locus">Bphy_1335</name>
</gene>